<sequence>MENIQKLIARYPLVEDLVALKETTWFNPGATSLAQGLPYVGLTEQDVNAAHDRLARFAPYLAKAFPQTAAAGGMIESDVVAIPAMQKRLEKEYGQTIDGEMLLKKDSHLAISGSIKARGGIYEVLTHAEKLALEAGLLTTDDDYSVLLSPEFKQFFSQYSIAVGSTGNLGLSIGIMSACIGFKVTVHMSADARAWKKAKLRSHGVTVVEYEDDYGVAVEQGRKAAQSDPNCFFIDDENSRTLFLGYAVAGQRLKAQFAQQGRVVDASHPLFVYLPCGVGGGPGGVAFGLKLAFGDNVHCFFAEPTHSPCMLLGVYTGLHDAISVQDIGIDNLTAADGLAVGRASGFVGRAMERLLDGLYTLDDQTMYDMLGWLAQEEGIRLEPSALAGMAGPQRICAAAAYQQRHGFSQTQLGNATHLVWATGGGMVPEDEMEQYLAKGR</sequence>
<keyword id="KW-0456">Lyase</keyword>
<keyword id="KW-0663">Pyridoxal phosphate</keyword>
<name>SDHD_SALNS</name>
<proteinExistence type="inferred from homology"/>
<evidence type="ECO:0000255" key="1">
    <source>
        <dbReference type="HAMAP-Rule" id="MF_01030"/>
    </source>
</evidence>
<gene>
    <name evidence="1" type="primary">dsdA</name>
    <name type="ordered locus">SNSL254_A4082</name>
</gene>
<protein>
    <recommendedName>
        <fullName evidence="1">D-serine dehydratase</fullName>
        <ecNumber evidence="1">4.3.1.18</ecNumber>
    </recommendedName>
    <alternativeName>
        <fullName evidence="1">D-serine deaminase</fullName>
        <shortName evidence="1">DSD</shortName>
    </alternativeName>
</protein>
<feature type="chain" id="PRO_1000197949" description="D-serine dehydratase">
    <location>
        <begin position="1"/>
        <end position="440"/>
    </location>
</feature>
<feature type="modified residue" description="N6-(pyridoxal phosphate)lysine" evidence="1">
    <location>
        <position position="116"/>
    </location>
</feature>
<organism>
    <name type="scientific">Salmonella newport (strain SL254)</name>
    <dbReference type="NCBI Taxonomy" id="423368"/>
    <lineage>
        <taxon>Bacteria</taxon>
        <taxon>Pseudomonadati</taxon>
        <taxon>Pseudomonadota</taxon>
        <taxon>Gammaproteobacteria</taxon>
        <taxon>Enterobacterales</taxon>
        <taxon>Enterobacteriaceae</taxon>
        <taxon>Salmonella</taxon>
    </lineage>
</organism>
<comment type="catalytic activity">
    <reaction evidence="1">
        <text>D-serine = pyruvate + NH4(+)</text>
        <dbReference type="Rhea" id="RHEA:13977"/>
        <dbReference type="ChEBI" id="CHEBI:15361"/>
        <dbReference type="ChEBI" id="CHEBI:28938"/>
        <dbReference type="ChEBI" id="CHEBI:35247"/>
        <dbReference type="EC" id="4.3.1.18"/>
    </reaction>
</comment>
<comment type="cofactor">
    <cofactor evidence="1">
        <name>pyridoxal 5'-phosphate</name>
        <dbReference type="ChEBI" id="CHEBI:597326"/>
    </cofactor>
</comment>
<comment type="subunit">
    <text evidence="1">Monomer.</text>
</comment>
<comment type="similarity">
    <text evidence="1">Belongs to the serine/threonine dehydratase family. DsdA subfamily.</text>
</comment>
<accession>B4SY68</accession>
<reference key="1">
    <citation type="journal article" date="2011" name="J. Bacteriol.">
        <title>Comparative genomics of 28 Salmonella enterica isolates: evidence for CRISPR-mediated adaptive sublineage evolution.</title>
        <authorList>
            <person name="Fricke W.F."/>
            <person name="Mammel M.K."/>
            <person name="McDermott P.F."/>
            <person name="Tartera C."/>
            <person name="White D.G."/>
            <person name="Leclerc J.E."/>
            <person name="Ravel J."/>
            <person name="Cebula T.A."/>
        </authorList>
    </citation>
    <scope>NUCLEOTIDE SEQUENCE [LARGE SCALE GENOMIC DNA]</scope>
    <source>
        <strain>SL254</strain>
    </source>
</reference>
<dbReference type="EC" id="4.3.1.18" evidence="1"/>
<dbReference type="EMBL" id="CP001113">
    <property type="protein sequence ID" value="ACF62146.1"/>
    <property type="molecule type" value="Genomic_DNA"/>
</dbReference>
<dbReference type="RefSeq" id="WP_000427986.1">
    <property type="nucleotide sequence ID" value="NZ_CCMR01000004.1"/>
</dbReference>
<dbReference type="SMR" id="B4SY68"/>
<dbReference type="KEGG" id="see:SNSL254_A4082"/>
<dbReference type="HOGENOM" id="CLU_035707_0_0_6"/>
<dbReference type="Proteomes" id="UP000008824">
    <property type="component" value="Chromosome"/>
</dbReference>
<dbReference type="GO" id="GO:0008721">
    <property type="term" value="F:D-serine ammonia-lyase activity"/>
    <property type="evidence" value="ECO:0007669"/>
    <property type="project" value="UniProtKB-EC"/>
</dbReference>
<dbReference type="GO" id="GO:0016836">
    <property type="term" value="F:hydro-lyase activity"/>
    <property type="evidence" value="ECO:0007669"/>
    <property type="project" value="UniProtKB-UniRule"/>
</dbReference>
<dbReference type="GO" id="GO:0030170">
    <property type="term" value="F:pyridoxal phosphate binding"/>
    <property type="evidence" value="ECO:0007669"/>
    <property type="project" value="InterPro"/>
</dbReference>
<dbReference type="GO" id="GO:0036088">
    <property type="term" value="P:D-serine catabolic process"/>
    <property type="evidence" value="ECO:0007669"/>
    <property type="project" value="TreeGrafter"/>
</dbReference>
<dbReference type="GO" id="GO:0009097">
    <property type="term" value="P:isoleucine biosynthetic process"/>
    <property type="evidence" value="ECO:0007669"/>
    <property type="project" value="TreeGrafter"/>
</dbReference>
<dbReference type="CDD" id="cd06447">
    <property type="entry name" value="D-Ser-dehyd"/>
    <property type="match status" value="1"/>
</dbReference>
<dbReference type="FunFam" id="3.40.50.1100:FF:000018">
    <property type="entry name" value="D-serine dehydratase"/>
    <property type="match status" value="1"/>
</dbReference>
<dbReference type="Gene3D" id="3.40.50.1100">
    <property type="match status" value="2"/>
</dbReference>
<dbReference type="HAMAP" id="MF_01030">
    <property type="entry name" value="D_Ser_dehydrat"/>
    <property type="match status" value="1"/>
</dbReference>
<dbReference type="InterPro" id="IPR011780">
    <property type="entry name" value="D_Ser_am_lyase"/>
</dbReference>
<dbReference type="InterPro" id="IPR050147">
    <property type="entry name" value="Ser/Thr_Dehydratase"/>
</dbReference>
<dbReference type="InterPro" id="IPR000634">
    <property type="entry name" value="Ser/Thr_deHydtase_PyrdxlP-BS"/>
</dbReference>
<dbReference type="InterPro" id="IPR001926">
    <property type="entry name" value="TrpB-like_PALP"/>
</dbReference>
<dbReference type="InterPro" id="IPR036052">
    <property type="entry name" value="TrpB-like_PALP_sf"/>
</dbReference>
<dbReference type="NCBIfam" id="TIGR02035">
    <property type="entry name" value="D_Ser_am_lyase"/>
    <property type="match status" value="1"/>
</dbReference>
<dbReference type="NCBIfam" id="NF002823">
    <property type="entry name" value="PRK02991.1"/>
    <property type="match status" value="1"/>
</dbReference>
<dbReference type="PANTHER" id="PTHR48078:SF9">
    <property type="entry name" value="D-SERINE DEHYDRATASE"/>
    <property type="match status" value="1"/>
</dbReference>
<dbReference type="PANTHER" id="PTHR48078">
    <property type="entry name" value="THREONINE DEHYDRATASE, MITOCHONDRIAL-RELATED"/>
    <property type="match status" value="1"/>
</dbReference>
<dbReference type="Pfam" id="PF00291">
    <property type="entry name" value="PALP"/>
    <property type="match status" value="1"/>
</dbReference>
<dbReference type="SUPFAM" id="SSF53686">
    <property type="entry name" value="Tryptophan synthase beta subunit-like PLP-dependent enzymes"/>
    <property type="match status" value="1"/>
</dbReference>
<dbReference type="PROSITE" id="PS00165">
    <property type="entry name" value="DEHYDRATASE_SER_THR"/>
    <property type="match status" value="1"/>
</dbReference>